<keyword id="KW-0066">ATP synthesis</keyword>
<keyword id="KW-0997">Cell inner membrane</keyword>
<keyword id="KW-1003">Cell membrane</keyword>
<keyword id="KW-0138">CF(0)</keyword>
<keyword id="KW-0291">Formylation</keyword>
<keyword id="KW-0375">Hydrogen ion transport</keyword>
<keyword id="KW-0406">Ion transport</keyword>
<keyword id="KW-0446">Lipid-binding</keyword>
<keyword id="KW-0472">Membrane</keyword>
<keyword id="KW-1185">Reference proteome</keyword>
<keyword id="KW-0812">Transmembrane</keyword>
<keyword id="KW-1133">Transmembrane helix</keyword>
<keyword id="KW-0813">Transport</keyword>
<comment type="function">
    <text evidence="2">F(1)F(0) ATP synthase produces ATP from ADP in the presence of a proton or sodium gradient. F-type ATPases consist of two structural domains, F(1) containing the extramembraneous catalytic core and F(0) containing the membrane proton channel, linked together by a central stalk and a peripheral stalk. During catalysis, ATP synthesis in the catalytic domain of F(1) is coupled via a rotary mechanism of the central stalk subunits to proton translocation.</text>
</comment>
<comment type="function">
    <text evidence="2">Key component of the F(0) channel; it plays a direct role in translocation across the membrane. A homomeric c-ring of between 10-14 subunits forms the central stalk rotor element with the F(1) delta and epsilon subunits.</text>
</comment>
<comment type="subunit">
    <text evidence="2">F-type ATPases have 2 components, F(1) - the catalytic core - and F(0) - the membrane proton channel. F(1) has five subunits: alpha(3), beta(3), gamma(1), delta(1), epsilon(1). F(0) has three main subunits: a(1), b(2) and c(10-14). The alpha and beta chains form an alternating ring which encloses part of the gamma chain. F(1) is attached to F(0) by a central stalk formed by the gamma and epsilon chains, while a peripheral stalk is formed by the delta and b chains.</text>
</comment>
<comment type="subcellular location">
    <subcellularLocation>
        <location evidence="2">Cell inner membrane</location>
        <topology evidence="2">Multi-pass membrane protein</topology>
    </subcellularLocation>
</comment>
<comment type="miscellaneous">
    <text evidence="1">Dicyclohexylcarbodiimide (DCDD) binding to the active aspartate residue inhibits ATPase in vitro.</text>
</comment>
<comment type="similarity">
    <text evidence="2">Belongs to the ATPase C chain family.</text>
</comment>
<reference key="1">
    <citation type="journal article" date="2001" name="Nature">
        <title>Genome sequence of Yersinia pestis, the causative agent of plague.</title>
        <authorList>
            <person name="Parkhill J."/>
            <person name="Wren B.W."/>
            <person name="Thomson N.R."/>
            <person name="Titball R.W."/>
            <person name="Holden M.T.G."/>
            <person name="Prentice M.B."/>
            <person name="Sebaihia M."/>
            <person name="James K.D."/>
            <person name="Churcher C.M."/>
            <person name="Mungall K.L."/>
            <person name="Baker S."/>
            <person name="Basham D."/>
            <person name="Bentley S.D."/>
            <person name="Brooks K."/>
            <person name="Cerdeno-Tarraga A.-M."/>
            <person name="Chillingworth T."/>
            <person name="Cronin A."/>
            <person name="Davies R.M."/>
            <person name="Davis P."/>
            <person name="Dougan G."/>
            <person name="Feltwell T."/>
            <person name="Hamlin N."/>
            <person name="Holroyd S."/>
            <person name="Jagels K."/>
            <person name="Karlyshev A.V."/>
            <person name="Leather S."/>
            <person name="Moule S."/>
            <person name="Oyston P.C.F."/>
            <person name="Quail M.A."/>
            <person name="Rutherford K.M."/>
            <person name="Simmonds M."/>
            <person name="Skelton J."/>
            <person name="Stevens K."/>
            <person name="Whitehead S."/>
            <person name="Barrell B.G."/>
        </authorList>
    </citation>
    <scope>NUCLEOTIDE SEQUENCE [LARGE SCALE GENOMIC DNA]</scope>
    <source>
        <strain>CO-92 / Biovar Orientalis</strain>
    </source>
</reference>
<reference key="2">
    <citation type="journal article" date="2002" name="J. Bacteriol.">
        <title>Genome sequence of Yersinia pestis KIM.</title>
        <authorList>
            <person name="Deng W."/>
            <person name="Burland V."/>
            <person name="Plunkett G. III"/>
            <person name="Boutin A."/>
            <person name="Mayhew G.F."/>
            <person name="Liss P."/>
            <person name="Perna N.T."/>
            <person name="Rose D.J."/>
            <person name="Mau B."/>
            <person name="Zhou S."/>
            <person name="Schwartz D.C."/>
            <person name="Fetherston J.D."/>
            <person name="Lindler L.E."/>
            <person name="Brubaker R.R."/>
            <person name="Plano G.V."/>
            <person name="Straley S.C."/>
            <person name="McDonough K.A."/>
            <person name="Nilles M.L."/>
            <person name="Matson J.S."/>
            <person name="Blattner F.R."/>
            <person name="Perry R.D."/>
        </authorList>
    </citation>
    <scope>NUCLEOTIDE SEQUENCE [LARGE SCALE GENOMIC DNA]</scope>
    <source>
        <strain>KIM10+ / Biovar Mediaevalis</strain>
    </source>
</reference>
<reference key="3">
    <citation type="journal article" date="2004" name="DNA Res.">
        <title>Complete genome sequence of Yersinia pestis strain 91001, an isolate avirulent to humans.</title>
        <authorList>
            <person name="Song Y."/>
            <person name="Tong Z."/>
            <person name="Wang J."/>
            <person name="Wang L."/>
            <person name="Guo Z."/>
            <person name="Han Y."/>
            <person name="Zhang J."/>
            <person name="Pei D."/>
            <person name="Zhou D."/>
            <person name="Qin H."/>
            <person name="Pang X."/>
            <person name="Han Y."/>
            <person name="Zhai J."/>
            <person name="Li M."/>
            <person name="Cui B."/>
            <person name="Qi Z."/>
            <person name="Jin L."/>
            <person name="Dai R."/>
            <person name="Chen F."/>
            <person name="Li S."/>
            <person name="Ye C."/>
            <person name="Du Z."/>
            <person name="Lin W."/>
            <person name="Wang J."/>
            <person name="Yu J."/>
            <person name="Yang H."/>
            <person name="Wang J."/>
            <person name="Huang P."/>
            <person name="Yang R."/>
        </authorList>
    </citation>
    <scope>NUCLEOTIDE SEQUENCE [LARGE SCALE GENOMIC DNA]</scope>
    <source>
        <strain>91001 / Biovar Mediaevalis</strain>
    </source>
</reference>
<name>ATPL_YERPE</name>
<protein>
    <recommendedName>
        <fullName evidence="2">ATP synthase subunit c</fullName>
    </recommendedName>
    <alternativeName>
        <fullName evidence="2">ATP synthase F(0) sector subunit c</fullName>
    </alternativeName>
    <alternativeName>
        <fullName evidence="2">F-type ATPase subunit c</fullName>
        <shortName evidence="2">F-ATPase subunit c</shortName>
    </alternativeName>
    <alternativeName>
        <fullName evidence="2">Lipid-binding protein</fullName>
    </alternativeName>
</protein>
<accession>P68706</accession>
<accession>P00844</accession>
<accession>Q0W9R1</accession>
<organism>
    <name type="scientific">Yersinia pestis</name>
    <dbReference type="NCBI Taxonomy" id="632"/>
    <lineage>
        <taxon>Bacteria</taxon>
        <taxon>Pseudomonadati</taxon>
        <taxon>Pseudomonadota</taxon>
        <taxon>Gammaproteobacteria</taxon>
        <taxon>Enterobacterales</taxon>
        <taxon>Yersiniaceae</taxon>
        <taxon>Yersinia</taxon>
    </lineage>
</organism>
<sequence length="79" mass="8256">MENLNMDLLYMAAAVMMGLAAIGAAIGIGILGGKFLEGAARQPDLIPLLRTQFFIVMGLVDAIPMIAVGLGLYVMFAVA</sequence>
<gene>
    <name evidence="2" type="primary">atpE</name>
    <name type="synonym">papH</name>
    <name type="synonym">uncE</name>
    <name type="ordered locus">YPO4126</name>
    <name type="ordered locus">y4140</name>
    <name type="ordered locus">YP_4033</name>
</gene>
<dbReference type="EMBL" id="AL590842">
    <property type="protein sequence ID" value="CAL22694.1"/>
    <property type="molecule type" value="Genomic_DNA"/>
</dbReference>
<dbReference type="EMBL" id="AE009952">
    <property type="protein sequence ID" value="AAM87682.1"/>
    <property type="molecule type" value="Genomic_DNA"/>
</dbReference>
<dbReference type="EMBL" id="AE017042">
    <property type="protein sequence ID" value="AAS64172.1"/>
    <property type="molecule type" value="Genomic_DNA"/>
</dbReference>
<dbReference type="PIR" id="AB0501">
    <property type="entry name" value="AB0501"/>
</dbReference>
<dbReference type="RefSeq" id="WP_000429386.1">
    <property type="nucleotide sequence ID" value="NZ_WUCM01000028.1"/>
</dbReference>
<dbReference type="RefSeq" id="YP_002348977.1">
    <property type="nucleotide sequence ID" value="NC_003143.1"/>
</dbReference>
<dbReference type="SMR" id="P68706"/>
<dbReference type="STRING" id="214092.YPO4126"/>
<dbReference type="PaxDb" id="214092-YPO4126"/>
<dbReference type="DNASU" id="1149087"/>
<dbReference type="EnsemblBacteria" id="AAS64172">
    <property type="protein sequence ID" value="AAS64172"/>
    <property type="gene ID" value="YP_4033"/>
</dbReference>
<dbReference type="GeneID" id="98390858"/>
<dbReference type="KEGG" id="ype:YPO4126"/>
<dbReference type="KEGG" id="ypk:y4140"/>
<dbReference type="KEGG" id="ypm:YP_4033"/>
<dbReference type="PATRIC" id="fig|214092.21.peg.4670"/>
<dbReference type="eggNOG" id="ENOG5032S3K">
    <property type="taxonomic scope" value="Bacteria"/>
</dbReference>
<dbReference type="HOGENOM" id="CLU_148047_1_0_6"/>
<dbReference type="OMA" id="RTQMFIV"/>
<dbReference type="OrthoDB" id="9811659at2"/>
<dbReference type="Proteomes" id="UP000000815">
    <property type="component" value="Chromosome"/>
</dbReference>
<dbReference type="Proteomes" id="UP000001019">
    <property type="component" value="Chromosome"/>
</dbReference>
<dbReference type="Proteomes" id="UP000002490">
    <property type="component" value="Chromosome"/>
</dbReference>
<dbReference type="GO" id="GO:0005886">
    <property type="term" value="C:plasma membrane"/>
    <property type="evidence" value="ECO:0007669"/>
    <property type="project" value="UniProtKB-SubCell"/>
</dbReference>
<dbReference type="GO" id="GO:0045259">
    <property type="term" value="C:proton-transporting ATP synthase complex"/>
    <property type="evidence" value="ECO:0007669"/>
    <property type="project" value="UniProtKB-KW"/>
</dbReference>
<dbReference type="GO" id="GO:0033177">
    <property type="term" value="C:proton-transporting two-sector ATPase complex, proton-transporting domain"/>
    <property type="evidence" value="ECO:0007669"/>
    <property type="project" value="InterPro"/>
</dbReference>
<dbReference type="GO" id="GO:0008289">
    <property type="term" value="F:lipid binding"/>
    <property type="evidence" value="ECO:0007669"/>
    <property type="project" value="UniProtKB-KW"/>
</dbReference>
<dbReference type="GO" id="GO:0046933">
    <property type="term" value="F:proton-transporting ATP synthase activity, rotational mechanism"/>
    <property type="evidence" value="ECO:0007669"/>
    <property type="project" value="UniProtKB-UniRule"/>
</dbReference>
<dbReference type="GO" id="GO:0015986">
    <property type="term" value="P:proton motive force-driven ATP synthesis"/>
    <property type="evidence" value="ECO:0000318"/>
    <property type="project" value="GO_Central"/>
</dbReference>
<dbReference type="CDD" id="cd18185">
    <property type="entry name" value="ATP-synt_Fo_c_ATPE"/>
    <property type="match status" value="1"/>
</dbReference>
<dbReference type="FunFam" id="1.20.20.10:FF:000002">
    <property type="entry name" value="ATP synthase subunit c"/>
    <property type="match status" value="1"/>
</dbReference>
<dbReference type="Gene3D" id="1.20.20.10">
    <property type="entry name" value="F1F0 ATP synthase subunit C"/>
    <property type="match status" value="1"/>
</dbReference>
<dbReference type="HAMAP" id="MF_01396">
    <property type="entry name" value="ATP_synth_c_bact"/>
    <property type="match status" value="1"/>
</dbReference>
<dbReference type="InterPro" id="IPR005953">
    <property type="entry name" value="ATP_synth_csu_bac/chlpt"/>
</dbReference>
<dbReference type="InterPro" id="IPR000454">
    <property type="entry name" value="ATP_synth_F0_csu"/>
</dbReference>
<dbReference type="InterPro" id="IPR020537">
    <property type="entry name" value="ATP_synth_F0_csu_DDCD_BS"/>
</dbReference>
<dbReference type="InterPro" id="IPR038662">
    <property type="entry name" value="ATP_synth_F0_csu_sf"/>
</dbReference>
<dbReference type="InterPro" id="IPR002379">
    <property type="entry name" value="ATPase_proteolipid_c-like_dom"/>
</dbReference>
<dbReference type="InterPro" id="IPR035921">
    <property type="entry name" value="F/V-ATP_Csub_sf"/>
</dbReference>
<dbReference type="NCBIfam" id="TIGR01260">
    <property type="entry name" value="ATP_synt_c"/>
    <property type="match status" value="1"/>
</dbReference>
<dbReference type="NCBIfam" id="NF005363">
    <property type="entry name" value="PRK06876.1"/>
    <property type="match status" value="1"/>
</dbReference>
<dbReference type="Pfam" id="PF00137">
    <property type="entry name" value="ATP-synt_C"/>
    <property type="match status" value="1"/>
</dbReference>
<dbReference type="PRINTS" id="PR00124">
    <property type="entry name" value="ATPASEC"/>
</dbReference>
<dbReference type="SUPFAM" id="SSF81333">
    <property type="entry name" value="F1F0 ATP synthase subunit C"/>
    <property type="match status" value="1"/>
</dbReference>
<dbReference type="PROSITE" id="PS00605">
    <property type="entry name" value="ATPASE_C"/>
    <property type="match status" value="1"/>
</dbReference>
<evidence type="ECO:0000250" key="1"/>
<evidence type="ECO:0000255" key="2">
    <source>
        <dbReference type="HAMAP-Rule" id="MF_01396"/>
    </source>
</evidence>
<feature type="chain" id="PRO_0000112178" description="ATP synthase subunit c">
    <location>
        <begin position="1"/>
        <end position="79"/>
    </location>
</feature>
<feature type="transmembrane region" description="Helical" evidence="2">
    <location>
        <begin position="11"/>
        <end position="31"/>
    </location>
</feature>
<feature type="transmembrane region" description="Helical" evidence="2">
    <location>
        <begin position="53"/>
        <end position="73"/>
    </location>
</feature>
<feature type="site" description="Reversibly protonated during proton transport" evidence="2">
    <location>
        <position position="61"/>
    </location>
</feature>
<feature type="modified residue" description="N-formylmethionine" evidence="1">
    <location>
        <position position="1"/>
    </location>
</feature>
<proteinExistence type="inferred from homology"/>